<keyword id="KW-0030">Aminoacyl-tRNA synthetase</keyword>
<keyword id="KW-0067">ATP-binding</keyword>
<keyword id="KW-0963">Cytoplasm</keyword>
<keyword id="KW-0436">Ligase</keyword>
<keyword id="KW-0479">Metal-binding</keyword>
<keyword id="KW-0547">Nucleotide-binding</keyword>
<keyword id="KW-0648">Protein biosynthesis</keyword>
<keyword id="KW-0694">RNA-binding</keyword>
<keyword id="KW-0820">tRNA-binding</keyword>
<keyword id="KW-0862">Zinc</keyword>
<organism>
    <name type="scientific">Yersinia pseudotuberculosis serotype IB (strain PB1/+)</name>
    <dbReference type="NCBI Taxonomy" id="502801"/>
    <lineage>
        <taxon>Bacteria</taxon>
        <taxon>Pseudomonadati</taxon>
        <taxon>Pseudomonadota</taxon>
        <taxon>Gammaproteobacteria</taxon>
        <taxon>Enterobacterales</taxon>
        <taxon>Yersiniaceae</taxon>
        <taxon>Yersinia</taxon>
    </lineage>
</organism>
<proteinExistence type="inferred from homology"/>
<sequence>MSKSTAEIRQAFLDFFHSKGHQVVSSSSLVPNNDPTLLFTNAGMNQFKDVFLGLDKRAYSRATTSQRCVRAGGKHNDLENVGYTARHHTFFEMLGNFSFGDYFKHDAINFAWELLTSEQWFNLPKEKLWVTVYETDDEAYNIWANEVGVPHERIIRIGDNKGGAFASDNFWQMGDTGPCGPCSEIFFDHGDHIWGGPPGSAEEDGDRYIEIWNIVFMQFNRQSDGTMLPLPKPSVDTGMGLERIAAVLQHVNSNYEIDLFRDLIAAVADVTGATDLSSKSLRVIADHIRSCAFLISDGVIPSNENRGYVLRRIIRRAIRHGNMLGAKETFFYKLVAPLIAVMGPAAAELKQQQAMVEQVLKTEEEQFARTLERGLALLDDELSKLTGDTLDGETAFRLYDTYGFPVDLTADVCRERNLKVDEAGFEQAMEAQRRRARESSGFGADYNSLIRVDSASQFSGYDHVQQHATVTALFRNGEAVDEIHAGEEAVVVLNRTPFYGESGGQVGDKGELKNATATFSVTDTQKYGQAIGHVGILTTGTLRVNHSVEALVDVVRRNRIRLNHSATHLLHAALRNVLGEHVAQKGSLVNDKYLRFDFSHFEAMKPEQIRLVEDLVNEQIRRNMPVQTEVMELDAAKEKGAMALFGEKYDDQVRVLTMGDFSTELCGGTHASRTGDIGLFRILTESGTAAGIRRIEAVTGEGAIALLHQQSDLLQDVAHLVKGDIHNLADKVRAVLDRSKMLERELQQLKDQQAAQESASLSSSAKLINGVKLLVSQLDNVEPKMLRTMVDDLKNQLGSAIIVLATTADDKVSLIVGVTKDLTGKVKAGELIADIAQQVGGKGGGRPDMAQAGGTDVQALPAALASVEAWVASRM</sequence>
<dbReference type="EC" id="6.1.1.7" evidence="1"/>
<dbReference type="EMBL" id="CP001048">
    <property type="protein sequence ID" value="ACC87845.1"/>
    <property type="molecule type" value="Genomic_DNA"/>
</dbReference>
<dbReference type="RefSeq" id="WP_011191808.1">
    <property type="nucleotide sequence ID" value="NZ_CP009780.1"/>
</dbReference>
<dbReference type="SMR" id="B2K5X9"/>
<dbReference type="GeneID" id="49787166"/>
<dbReference type="KEGG" id="ypb:YPTS_0861"/>
<dbReference type="PATRIC" id="fig|502801.10.peg.194"/>
<dbReference type="GO" id="GO:0005829">
    <property type="term" value="C:cytosol"/>
    <property type="evidence" value="ECO:0007669"/>
    <property type="project" value="TreeGrafter"/>
</dbReference>
<dbReference type="GO" id="GO:0004813">
    <property type="term" value="F:alanine-tRNA ligase activity"/>
    <property type="evidence" value="ECO:0007669"/>
    <property type="project" value="UniProtKB-UniRule"/>
</dbReference>
<dbReference type="GO" id="GO:0002161">
    <property type="term" value="F:aminoacyl-tRNA deacylase activity"/>
    <property type="evidence" value="ECO:0007669"/>
    <property type="project" value="TreeGrafter"/>
</dbReference>
<dbReference type="GO" id="GO:0005524">
    <property type="term" value="F:ATP binding"/>
    <property type="evidence" value="ECO:0007669"/>
    <property type="project" value="UniProtKB-UniRule"/>
</dbReference>
<dbReference type="GO" id="GO:0000049">
    <property type="term" value="F:tRNA binding"/>
    <property type="evidence" value="ECO:0007669"/>
    <property type="project" value="UniProtKB-KW"/>
</dbReference>
<dbReference type="GO" id="GO:0008270">
    <property type="term" value="F:zinc ion binding"/>
    <property type="evidence" value="ECO:0007669"/>
    <property type="project" value="UniProtKB-UniRule"/>
</dbReference>
<dbReference type="GO" id="GO:0006419">
    <property type="term" value="P:alanyl-tRNA aminoacylation"/>
    <property type="evidence" value="ECO:0007669"/>
    <property type="project" value="UniProtKB-UniRule"/>
</dbReference>
<dbReference type="GO" id="GO:0045892">
    <property type="term" value="P:negative regulation of DNA-templated transcription"/>
    <property type="evidence" value="ECO:0007669"/>
    <property type="project" value="TreeGrafter"/>
</dbReference>
<dbReference type="CDD" id="cd00673">
    <property type="entry name" value="AlaRS_core"/>
    <property type="match status" value="1"/>
</dbReference>
<dbReference type="FunFam" id="2.40.30.130:FF:000001">
    <property type="entry name" value="Alanine--tRNA ligase"/>
    <property type="match status" value="1"/>
</dbReference>
<dbReference type="FunFam" id="3.10.310.40:FF:000001">
    <property type="entry name" value="Alanine--tRNA ligase"/>
    <property type="match status" value="1"/>
</dbReference>
<dbReference type="FunFam" id="3.30.54.20:FF:000001">
    <property type="entry name" value="Alanine--tRNA ligase"/>
    <property type="match status" value="1"/>
</dbReference>
<dbReference type="FunFam" id="3.30.930.10:FF:000004">
    <property type="entry name" value="Alanine--tRNA ligase"/>
    <property type="match status" value="1"/>
</dbReference>
<dbReference type="FunFam" id="3.30.980.10:FF:000004">
    <property type="entry name" value="Alanine--tRNA ligase, cytoplasmic"/>
    <property type="match status" value="1"/>
</dbReference>
<dbReference type="Gene3D" id="2.40.30.130">
    <property type="match status" value="1"/>
</dbReference>
<dbReference type="Gene3D" id="3.10.310.40">
    <property type="match status" value="1"/>
</dbReference>
<dbReference type="Gene3D" id="3.30.54.20">
    <property type="match status" value="1"/>
</dbReference>
<dbReference type="Gene3D" id="6.10.250.550">
    <property type="match status" value="1"/>
</dbReference>
<dbReference type="Gene3D" id="3.30.930.10">
    <property type="entry name" value="Bira Bifunctional Protein, Domain 2"/>
    <property type="match status" value="1"/>
</dbReference>
<dbReference type="Gene3D" id="3.30.980.10">
    <property type="entry name" value="Threonyl-trna Synthetase, Chain A, domain 2"/>
    <property type="match status" value="1"/>
</dbReference>
<dbReference type="HAMAP" id="MF_00036_B">
    <property type="entry name" value="Ala_tRNA_synth_B"/>
    <property type="match status" value="1"/>
</dbReference>
<dbReference type="InterPro" id="IPR045864">
    <property type="entry name" value="aa-tRNA-synth_II/BPL/LPL"/>
</dbReference>
<dbReference type="InterPro" id="IPR002318">
    <property type="entry name" value="Ala-tRNA-lgiase_IIc"/>
</dbReference>
<dbReference type="InterPro" id="IPR018162">
    <property type="entry name" value="Ala-tRNA-ligase_IIc_anticod-bd"/>
</dbReference>
<dbReference type="InterPro" id="IPR018165">
    <property type="entry name" value="Ala-tRNA-synth_IIc_core"/>
</dbReference>
<dbReference type="InterPro" id="IPR018164">
    <property type="entry name" value="Ala-tRNA-synth_IIc_N"/>
</dbReference>
<dbReference type="InterPro" id="IPR050058">
    <property type="entry name" value="Ala-tRNA_ligase"/>
</dbReference>
<dbReference type="InterPro" id="IPR023033">
    <property type="entry name" value="Ala_tRNA_ligase_euk/bac"/>
</dbReference>
<dbReference type="InterPro" id="IPR003156">
    <property type="entry name" value="DHHA1_dom"/>
</dbReference>
<dbReference type="InterPro" id="IPR018163">
    <property type="entry name" value="Thr/Ala-tRNA-synth_IIc_edit"/>
</dbReference>
<dbReference type="InterPro" id="IPR009000">
    <property type="entry name" value="Transl_B-barrel_sf"/>
</dbReference>
<dbReference type="InterPro" id="IPR012947">
    <property type="entry name" value="tRNA_SAD"/>
</dbReference>
<dbReference type="NCBIfam" id="TIGR00344">
    <property type="entry name" value="alaS"/>
    <property type="match status" value="1"/>
</dbReference>
<dbReference type="PANTHER" id="PTHR11777:SF9">
    <property type="entry name" value="ALANINE--TRNA LIGASE, CYTOPLASMIC"/>
    <property type="match status" value="1"/>
</dbReference>
<dbReference type="PANTHER" id="PTHR11777">
    <property type="entry name" value="ALANYL-TRNA SYNTHETASE"/>
    <property type="match status" value="1"/>
</dbReference>
<dbReference type="Pfam" id="PF02272">
    <property type="entry name" value="DHHA1"/>
    <property type="match status" value="1"/>
</dbReference>
<dbReference type="Pfam" id="PF01411">
    <property type="entry name" value="tRNA-synt_2c"/>
    <property type="match status" value="1"/>
</dbReference>
<dbReference type="Pfam" id="PF07973">
    <property type="entry name" value="tRNA_SAD"/>
    <property type="match status" value="1"/>
</dbReference>
<dbReference type="PRINTS" id="PR00980">
    <property type="entry name" value="TRNASYNTHALA"/>
</dbReference>
<dbReference type="SMART" id="SM00863">
    <property type="entry name" value="tRNA_SAD"/>
    <property type="match status" value="1"/>
</dbReference>
<dbReference type="SUPFAM" id="SSF55681">
    <property type="entry name" value="Class II aaRS and biotin synthetases"/>
    <property type="match status" value="1"/>
</dbReference>
<dbReference type="SUPFAM" id="SSF101353">
    <property type="entry name" value="Putative anticodon-binding domain of alanyl-tRNA synthetase (AlaRS)"/>
    <property type="match status" value="1"/>
</dbReference>
<dbReference type="SUPFAM" id="SSF55186">
    <property type="entry name" value="ThrRS/AlaRS common domain"/>
    <property type="match status" value="1"/>
</dbReference>
<dbReference type="SUPFAM" id="SSF50447">
    <property type="entry name" value="Translation proteins"/>
    <property type="match status" value="1"/>
</dbReference>
<dbReference type="PROSITE" id="PS50860">
    <property type="entry name" value="AA_TRNA_LIGASE_II_ALA"/>
    <property type="match status" value="1"/>
</dbReference>
<accession>B2K5X9</accession>
<feature type="chain" id="PRO_0000347874" description="Alanine--tRNA ligase">
    <location>
        <begin position="1"/>
        <end position="875"/>
    </location>
</feature>
<feature type="binding site" evidence="1">
    <location>
        <position position="564"/>
    </location>
    <ligand>
        <name>Zn(2+)</name>
        <dbReference type="ChEBI" id="CHEBI:29105"/>
    </ligand>
</feature>
<feature type="binding site" evidence="1">
    <location>
        <position position="568"/>
    </location>
    <ligand>
        <name>Zn(2+)</name>
        <dbReference type="ChEBI" id="CHEBI:29105"/>
    </ligand>
</feature>
<feature type="binding site" evidence="1">
    <location>
        <position position="666"/>
    </location>
    <ligand>
        <name>Zn(2+)</name>
        <dbReference type="ChEBI" id="CHEBI:29105"/>
    </ligand>
</feature>
<feature type="binding site" evidence="1">
    <location>
        <position position="670"/>
    </location>
    <ligand>
        <name>Zn(2+)</name>
        <dbReference type="ChEBI" id="CHEBI:29105"/>
    </ligand>
</feature>
<name>SYA_YERPB</name>
<reference key="1">
    <citation type="submission" date="2008-04" db="EMBL/GenBank/DDBJ databases">
        <title>Complete sequence of Yersinia pseudotuberculosis PB1/+.</title>
        <authorList>
            <person name="Copeland A."/>
            <person name="Lucas S."/>
            <person name="Lapidus A."/>
            <person name="Glavina del Rio T."/>
            <person name="Dalin E."/>
            <person name="Tice H."/>
            <person name="Bruce D."/>
            <person name="Goodwin L."/>
            <person name="Pitluck S."/>
            <person name="Munk A.C."/>
            <person name="Brettin T."/>
            <person name="Detter J.C."/>
            <person name="Han C."/>
            <person name="Tapia R."/>
            <person name="Schmutz J."/>
            <person name="Larimer F."/>
            <person name="Land M."/>
            <person name="Hauser L."/>
            <person name="Challacombe J.F."/>
            <person name="Green L."/>
            <person name="Lindler L.E."/>
            <person name="Nikolich M.P."/>
            <person name="Richardson P."/>
        </authorList>
    </citation>
    <scope>NUCLEOTIDE SEQUENCE [LARGE SCALE GENOMIC DNA]</scope>
    <source>
        <strain>PB1/+</strain>
    </source>
</reference>
<evidence type="ECO:0000255" key="1">
    <source>
        <dbReference type="HAMAP-Rule" id="MF_00036"/>
    </source>
</evidence>
<protein>
    <recommendedName>
        <fullName evidence="1">Alanine--tRNA ligase</fullName>
        <ecNumber evidence="1">6.1.1.7</ecNumber>
    </recommendedName>
    <alternativeName>
        <fullName evidence="1">Alanyl-tRNA synthetase</fullName>
        <shortName evidence="1">AlaRS</shortName>
    </alternativeName>
</protein>
<gene>
    <name evidence="1" type="primary">alaS</name>
    <name type="ordered locus">YPTS_0861</name>
</gene>
<comment type="function">
    <text evidence="1">Catalyzes the attachment of alanine to tRNA(Ala) in a two-step reaction: alanine is first activated by ATP to form Ala-AMP and then transferred to the acceptor end of tRNA(Ala). Also edits incorrectly charged Ser-tRNA(Ala) and Gly-tRNA(Ala) via its editing domain.</text>
</comment>
<comment type="catalytic activity">
    <reaction evidence="1">
        <text>tRNA(Ala) + L-alanine + ATP = L-alanyl-tRNA(Ala) + AMP + diphosphate</text>
        <dbReference type="Rhea" id="RHEA:12540"/>
        <dbReference type="Rhea" id="RHEA-COMP:9657"/>
        <dbReference type="Rhea" id="RHEA-COMP:9923"/>
        <dbReference type="ChEBI" id="CHEBI:30616"/>
        <dbReference type="ChEBI" id="CHEBI:33019"/>
        <dbReference type="ChEBI" id="CHEBI:57972"/>
        <dbReference type="ChEBI" id="CHEBI:78442"/>
        <dbReference type="ChEBI" id="CHEBI:78497"/>
        <dbReference type="ChEBI" id="CHEBI:456215"/>
        <dbReference type="EC" id="6.1.1.7"/>
    </reaction>
</comment>
<comment type="cofactor">
    <cofactor evidence="1">
        <name>Zn(2+)</name>
        <dbReference type="ChEBI" id="CHEBI:29105"/>
    </cofactor>
    <text evidence="1">Binds 1 zinc ion per subunit.</text>
</comment>
<comment type="subunit">
    <text evidence="1">Homotetramer.</text>
</comment>
<comment type="subcellular location">
    <subcellularLocation>
        <location evidence="1">Cytoplasm</location>
    </subcellularLocation>
</comment>
<comment type="domain">
    <text evidence="1">Consists of three domains; the N-terminal catalytic domain, the editing domain and the C-terminal C-Ala domain. The editing domain removes incorrectly charged amino acids, while the C-Ala domain, along with tRNA(Ala), serves as a bridge to cooperatively bring together the editing and aminoacylation centers thus stimulating deacylation of misacylated tRNAs.</text>
</comment>
<comment type="similarity">
    <text evidence="1">Belongs to the class-II aminoacyl-tRNA synthetase family.</text>
</comment>